<proteinExistence type="inferred from homology"/>
<evidence type="ECO:0000255" key="1">
    <source>
        <dbReference type="HAMAP-Rule" id="MF_00368"/>
    </source>
</evidence>
<evidence type="ECO:0000305" key="2"/>
<protein>
    <recommendedName>
        <fullName evidence="1">Large ribosomal subunit protein bL12</fullName>
    </recommendedName>
    <alternativeName>
        <fullName evidence="2">50S ribosomal protein L7/L12</fullName>
    </alternativeName>
</protein>
<keyword id="KW-1185">Reference proteome</keyword>
<keyword id="KW-0687">Ribonucleoprotein</keyword>
<keyword id="KW-0689">Ribosomal protein</keyword>
<organism>
    <name type="scientific">Escherichia coli (strain 55989 / EAEC)</name>
    <dbReference type="NCBI Taxonomy" id="585055"/>
    <lineage>
        <taxon>Bacteria</taxon>
        <taxon>Pseudomonadati</taxon>
        <taxon>Pseudomonadota</taxon>
        <taxon>Gammaproteobacteria</taxon>
        <taxon>Enterobacterales</taxon>
        <taxon>Enterobacteriaceae</taxon>
        <taxon>Escherichia</taxon>
    </lineage>
</organism>
<feature type="chain" id="PRO_1000195794" description="Large ribosomal subunit protein bL12">
    <location>
        <begin position="1"/>
        <end position="121"/>
    </location>
</feature>
<sequence>MSITKDQIIEAVAAMSVMDVVELISAMEEKFGVSAAAAVAVAAGPVEAAEEKTEFDVILKAAGANKVAVIKAVRGATGLGLKEAKDLVESAPAALKEGVSKDDAEALKKALEEAGAEVEVK</sequence>
<reference key="1">
    <citation type="journal article" date="2009" name="PLoS Genet.">
        <title>Organised genome dynamics in the Escherichia coli species results in highly diverse adaptive paths.</title>
        <authorList>
            <person name="Touchon M."/>
            <person name="Hoede C."/>
            <person name="Tenaillon O."/>
            <person name="Barbe V."/>
            <person name="Baeriswyl S."/>
            <person name="Bidet P."/>
            <person name="Bingen E."/>
            <person name="Bonacorsi S."/>
            <person name="Bouchier C."/>
            <person name="Bouvet O."/>
            <person name="Calteau A."/>
            <person name="Chiapello H."/>
            <person name="Clermont O."/>
            <person name="Cruveiller S."/>
            <person name="Danchin A."/>
            <person name="Diard M."/>
            <person name="Dossat C."/>
            <person name="Karoui M.E."/>
            <person name="Frapy E."/>
            <person name="Garry L."/>
            <person name="Ghigo J.M."/>
            <person name="Gilles A.M."/>
            <person name="Johnson J."/>
            <person name="Le Bouguenec C."/>
            <person name="Lescat M."/>
            <person name="Mangenot S."/>
            <person name="Martinez-Jehanne V."/>
            <person name="Matic I."/>
            <person name="Nassif X."/>
            <person name="Oztas S."/>
            <person name="Petit M.A."/>
            <person name="Pichon C."/>
            <person name="Rouy Z."/>
            <person name="Ruf C.S."/>
            <person name="Schneider D."/>
            <person name="Tourret J."/>
            <person name="Vacherie B."/>
            <person name="Vallenet D."/>
            <person name="Medigue C."/>
            <person name="Rocha E.P.C."/>
            <person name="Denamur E."/>
        </authorList>
    </citation>
    <scope>NUCLEOTIDE SEQUENCE [LARGE SCALE GENOMIC DNA]</scope>
    <source>
        <strain>55989 / EAEC</strain>
    </source>
</reference>
<dbReference type="EMBL" id="CU928145">
    <property type="protein sequence ID" value="CAV01226.1"/>
    <property type="molecule type" value="Genomic_DNA"/>
</dbReference>
<dbReference type="RefSeq" id="WP_000028878.1">
    <property type="nucleotide sequence ID" value="NZ_CP028304.1"/>
</dbReference>
<dbReference type="SMR" id="B7LA79"/>
<dbReference type="GeneID" id="86944525"/>
<dbReference type="KEGG" id="eck:EC55989_4470"/>
<dbReference type="HOGENOM" id="CLU_086499_3_2_6"/>
<dbReference type="Proteomes" id="UP000000746">
    <property type="component" value="Chromosome"/>
</dbReference>
<dbReference type="GO" id="GO:0022625">
    <property type="term" value="C:cytosolic large ribosomal subunit"/>
    <property type="evidence" value="ECO:0007669"/>
    <property type="project" value="TreeGrafter"/>
</dbReference>
<dbReference type="GO" id="GO:0003729">
    <property type="term" value="F:mRNA binding"/>
    <property type="evidence" value="ECO:0007669"/>
    <property type="project" value="TreeGrafter"/>
</dbReference>
<dbReference type="GO" id="GO:0003735">
    <property type="term" value="F:structural constituent of ribosome"/>
    <property type="evidence" value="ECO:0007669"/>
    <property type="project" value="InterPro"/>
</dbReference>
<dbReference type="GO" id="GO:0006412">
    <property type="term" value="P:translation"/>
    <property type="evidence" value="ECO:0007669"/>
    <property type="project" value="UniProtKB-UniRule"/>
</dbReference>
<dbReference type="CDD" id="cd00387">
    <property type="entry name" value="Ribosomal_L7_L12"/>
    <property type="match status" value="1"/>
</dbReference>
<dbReference type="FunFam" id="1.20.5.710:FF:000001">
    <property type="entry name" value="50S ribosomal protein L7/L12"/>
    <property type="match status" value="1"/>
</dbReference>
<dbReference type="FunFam" id="3.30.1390.10:FF:000001">
    <property type="entry name" value="50S ribosomal protein L7/L12"/>
    <property type="match status" value="1"/>
</dbReference>
<dbReference type="Gene3D" id="3.30.1390.10">
    <property type="match status" value="1"/>
</dbReference>
<dbReference type="Gene3D" id="1.20.5.710">
    <property type="entry name" value="Single helix bin"/>
    <property type="match status" value="1"/>
</dbReference>
<dbReference type="HAMAP" id="MF_00368">
    <property type="entry name" value="Ribosomal_bL12"/>
    <property type="match status" value="1"/>
</dbReference>
<dbReference type="InterPro" id="IPR000206">
    <property type="entry name" value="Ribosomal_bL12"/>
</dbReference>
<dbReference type="InterPro" id="IPR013823">
    <property type="entry name" value="Ribosomal_bL12_C"/>
</dbReference>
<dbReference type="InterPro" id="IPR014719">
    <property type="entry name" value="Ribosomal_bL12_C/ClpS-like"/>
</dbReference>
<dbReference type="InterPro" id="IPR008932">
    <property type="entry name" value="Ribosomal_bL12_oligo"/>
</dbReference>
<dbReference type="InterPro" id="IPR036235">
    <property type="entry name" value="Ribosomal_bL12_oligo_N_sf"/>
</dbReference>
<dbReference type="NCBIfam" id="TIGR00855">
    <property type="entry name" value="L12"/>
    <property type="match status" value="1"/>
</dbReference>
<dbReference type="PANTHER" id="PTHR45987">
    <property type="entry name" value="39S RIBOSOMAL PROTEIN L12"/>
    <property type="match status" value="1"/>
</dbReference>
<dbReference type="PANTHER" id="PTHR45987:SF4">
    <property type="entry name" value="LARGE RIBOSOMAL SUBUNIT PROTEIN BL12M"/>
    <property type="match status" value="1"/>
</dbReference>
<dbReference type="Pfam" id="PF00542">
    <property type="entry name" value="Ribosomal_L12"/>
    <property type="match status" value="1"/>
</dbReference>
<dbReference type="Pfam" id="PF16320">
    <property type="entry name" value="Ribosomal_L12_N"/>
    <property type="match status" value="1"/>
</dbReference>
<dbReference type="SUPFAM" id="SSF54736">
    <property type="entry name" value="ClpS-like"/>
    <property type="match status" value="1"/>
</dbReference>
<dbReference type="SUPFAM" id="SSF48300">
    <property type="entry name" value="Ribosomal protein L7/12, oligomerisation (N-terminal) domain"/>
    <property type="match status" value="1"/>
</dbReference>
<gene>
    <name evidence="1" type="primary">rplL</name>
    <name type="ordered locus">EC55989_4470</name>
</gene>
<accession>B7LA79</accession>
<comment type="function">
    <text evidence="1">Forms part of the ribosomal stalk which helps the ribosome interact with GTP-bound translation factors. Is thus essential for accurate translation.</text>
</comment>
<comment type="subunit">
    <text evidence="1">Homodimer. Part of the ribosomal stalk of the 50S ribosomal subunit. Forms a multimeric L10(L12)X complex, where L10 forms an elongated spine to which 2 to 4 L12 dimers bind in a sequential fashion. Binds GTP-bound translation factors.</text>
</comment>
<comment type="similarity">
    <text evidence="1">Belongs to the bacterial ribosomal protein bL12 family.</text>
</comment>
<name>RL7_ECO55</name>